<proteinExistence type="inferred from homology"/>
<feature type="chain" id="PRO_0000224824" description="Putative TrmH family tRNA/rRNA methyltransferase">
    <location>
        <begin position="1"/>
        <end position="248"/>
    </location>
</feature>
<feature type="binding site" evidence="1">
    <location>
        <position position="196"/>
    </location>
    <ligand>
        <name>S-adenosyl-L-methionine</name>
        <dbReference type="ChEBI" id="CHEBI:59789"/>
    </ligand>
</feature>
<feature type="binding site" evidence="1">
    <location>
        <position position="216"/>
    </location>
    <ligand>
        <name>S-adenosyl-L-methionine</name>
        <dbReference type="ChEBI" id="CHEBI:59789"/>
    </ligand>
</feature>
<feature type="binding site" evidence="1">
    <location>
        <position position="225"/>
    </location>
    <ligand>
        <name>S-adenosyl-L-methionine</name>
        <dbReference type="ChEBI" id="CHEBI:59789"/>
    </ligand>
</feature>
<reference key="1">
    <citation type="submission" date="2000-12" db="EMBL/GenBank/DDBJ databases">
        <title>The sigH locus of Staphylococcus aureus involved in methicillin resistance.</title>
        <authorList>
            <person name="Bischoff M."/>
        </authorList>
    </citation>
    <scope>NUCLEOTIDE SEQUENCE [GENOMIC DNA]</scope>
</reference>
<reference key="2">
    <citation type="journal article" date="2008" name="J. Bacteriol.">
        <title>Genome sequence of Staphylococcus aureus strain Newman and comparative analysis of staphylococcal genomes: polymorphism and evolution of two major pathogenicity islands.</title>
        <authorList>
            <person name="Baba T."/>
            <person name="Bae T."/>
            <person name="Schneewind O."/>
            <person name="Takeuchi F."/>
            <person name="Hiramatsu K."/>
        </authorList>
    </citation>
    <scope>NUCLEOTIDE SEQUENCE [LARGE SCALE GENOMIC DNA]</scope>
    <source>
        <strain>Newman</strain>
    </source>
</reference>
<organism>
    <name type="scientific">Staphylococcus aureus (strain Newman)</name>
    <dbReference type="NCBI Taxonomy" id="426430"/>
    <lineage>
        <taxon>Bacteria</taxon>
        <taxon>Bacillati</taxon>
        <taxon>Bacillota</taxon>
        <taxon>Bacilli</taxon>
        <taxon>Bacillales</taxon>
        <taxon>Staphylococcaceae</taxon>
        <taxon>Staphylococcus</taxon>
    </lineage>
</organism>
<sequence>MEDTVIVGRHAVREAIITGHPINKILIQEGIKKQQINEILKNAKDQKIIVQTVPKSKLDFLANAPHQGVAALIAPYEYADFDQFLKQQKEKEGLLTVLILDGLEDPHNLGSILRTADATGVDGVIIPKRRSVTLTQTVAKASTGAIEHVPVIRVTNLAKTIDELKDNGFWVAGTEANNATDYRNLEADMSLAIVIGSEGQGMSRLVSDKCDFYIKIPMVGHVNSLNASVAASLMMYEVFRKRHDVGEI</sequence>
<comment type="similarity">
    <text evidence="2">Belongs to the class IV-like SAM-binding methyltransferase superfamily. RNA methyltransferase TrmH family.</text>
</comment>
<name>TRMHL_STAAE</name>
<protein>
    <recommendedName>
        <fullName>Putative TrmH family tRNA/rRNA methyltransferase</fullName>
        <ecNumber>2.1.1.-</ecNumber>
    </recommendedName>
</protein>
<gene>
    <name type="ordered locus">NWMN_0494</name>
</gene>
<keyword id="KW-0489">Methyltransferase</keyword>
<keyword id="KW-0808">Transferase</keyword>
<accession>Q9AGT0</accession>
<accession>A6QEI4</accession>
<dbReference type="EC" id="2.1.1.-"/>
<dbReference type="EMBL" id="AF327733">
    <property type="protein sequence ID" value="AAK15305.1"/>
    <property type="molecule type" value="Genomic_DNA"/>
</dbReference>
<dbReference type="EMBL" id="AP009351">
    <property type="protein sequence ID" value="BAF66766.1"/>
    <property type="molecule type" value="Genomic_DNA"/>
</dbReference>
<dbReference type="SMR" id="Q9AGT0"/>
<dbReference type="KEGG" id="sae:NWMN_0494"/>
<dbReference type="HOGENOM" id="CLU_021322_0_1_9"/>
<dbReference type="Proteomes" id="UP000006386">
    <property type="component" value="Chromosome"/>
</dbReference>
<dbReference type="GO" id="GO:0005829">
    <property type="term" value="C:cytosol"/>
    <property type="evidence" value="ECO:0007669"/>
    <property type="project" value="TreeGrafter"/>
</dbReference>
<dbReference type="GO" id="GO:0003723">
    <property type="term" value="F:RNA binding"/>
    <property type="evidence" value="ECO:0007669"/>
    <property type="project" value="InterPro"/>
</dbReference>
<dbReference type="GO" id="GO:0008173">
    <property type="term" value="F:RNA methyltransferase activity"/>
    <property type="evidence" value="ECO:0007669"/>
    <property type="project" value="InterPro"/>
</dbReference>
<dbReference type="GO" id="GO:0032259">
    <property type="term" value="P:methylation"/>
    <property type="evidence" value="ECO:0007669"/>
    <property type="project" value="UniProtKB-KW"/>
</dbReference>
<dbReference type="GO" id="GO:0006396">
    <property type="term" value="P:RNA processing"/>
    <property type="evidence" value="ECO:0007669"/>
    <property type="project" value="InterPro"/>
</dbReference>
<dbReference type="CDD" id="cd18103">
    <property type="entry name" value="SpoU-like_RlmB"/>
    <property type="match status" value="1"/>
</dbReference>
<dbReference type="FunFam" id="3.40.1280.10:FF:000008">
    <property type="entry name" value="Group 3 RNA methyltransferase TrmH"/>
    <property type="match status" value="1"/>
</dbReference>
<dbReference type="Gene3D" id="3.30.1330.30">
    <property type="match status" value="1"/>
</dbReference>
<dbReference type="Gene3D" id="3.40.1280.10">
    <property type="match status" value="1"/>
</dbReference>
<dbReference type="InterPro" id="IPR029028">
    <property type="entry name" value="Alpha/beta_knot_MTases"/>
</dbReference>
<dbReference type="InterPro" id="IPR029064">
    <property type="entry name" value="Ribosomal_eL30-like_sf"/>
</dbReference>
<dbReference type="InterPro" id="IPR004441">
    <property type="entry name" value="rRNA_MeTrfase_TrmH"/>
</dbReference>
<dbReference type="InterPro" id="IPR001537">
    <property type="entry name" value="SpoU_MeTrfase"/>
</dbReference>
<dbReference type="InterPro" id="IPR013123">
    <property type="entry name" value="SpoU_subst-bd"/>
</dbReference>
<dbReference type="InterPro" id="IPR029026">
    <property type="entry name" value="tRNA_m1G_MTases_N"/>
</dbReference>
<dbReference type="NCBIfam" id="TIGR00186">
    <property type="entry name" value="rRNA_methyl_3"/>
    <property type="match status" value="1"/>
</dbReference>
<dbReference type="PANTHER" id="PTHR46429">
    <property type="entry name" value="23S RRNA (GUANOSINE-2'-O-)-METHYLTRANSFERASE RLMB"/>
    <property type="match status" value="1"/>
</dbReference>
<dbReference type="PANTHER" id="PTHR46429:SF1">
    <property type="entry name" value="23S RRNA (GUANOSINE-2'-O-)-METHYLTRANSFERASE RLMB"/>
    <property type="match status" value="1"/>
</dbReference>
<dbReference type="Pfam" id="PF00588">
    <property type="entry name" value="SpoU_methylase"/>
    <property type="match status" value="1"/>
</dbReference>
<dbReference type="Pfam" id="PF08032">
    <property type="entry name" value="SpoU_sub_bind"/>
    <property type="match status" value="1"/>
</dbReference>
<dbReference type="SMART" id="SM00967">
    <property type="entry name" value="SpoU_sub_bind"/>
    <property type="match status" value="1"/>
</dbReference>
<dbReference type="SUPFAM" id="SSF75217">
    <property type="entry name" value="alpha/beta knot"/>
    <property type="match status" value="1"/>
</dbReference>
<dbReference type="SUPFAM" id="SSF55315">
    <property type="entry name" value="L30e-like"/>
    <property type="match status" value="1"/>
</dbReference>
<evidence type="ECO:0000250" key="1"/>
<evidence type="ECO:0000305" key="2"/>